<gene>
    <name type="primary">TAS2R4</name>
</gene>
<reference key="1">
    <citation type="journal article" date="2005" name="Mol. Biol. Evol.">
        <title>Evolution of bitter taste receptors in humans and apes.</title>
        <authorList>
            <person name="Fischer A."/>
            <person name="Gilad Y."/>
            <person name="Man O."/>
            <person name="Paeaebo S."/>
        </authorList>
    </citation>
    <scope>NUCLEOTIDE SEQUENCE [GENOMIC DNA]</scope>
</reference>
<reference key="2">
    <citation type="journal article" date="2004" name="Proc. Natl. Acad. Sci. U.S.A.">
        <title>Divergence of T2R chemosensory receptor families in humans, bonobos, and chimpanzees.</title>
        <authorList>
            <person name="Parry C.M."/>
            <person name="Erkner A."/>
            <person name="le Coutre J."/>
        </authorList>
    </citation>
    <scope>NUCLEOTIDE SEQUENCE [GENOMIC DNA]</scope>
</reference>
<comment type="function">
    <text evidence="1">Gustducin-coupled receptor implicated in the perception of bitter compounds in the oral cavity and the gastrointestinal tract. Signals through PLCB2 and the calcium-regulated cation channel TRPM5 (By similarity). In airway epithelial cells, binding of denatonium increases the intracellular calcium ion concentration and stimulates ciliary beat frequency (By similarity).</text>
</comment>
<comment type="subcellular location">
    <subcellularLocation>
        <location>Membrane</location>
        <topology>Multi-pass membrane protein</topology>
    </subcellularLocation>
    <subcellularLocation>
        <location>Cell projection</location>
        <location>Cilium membrane</location>
    </subcellularLocation>
    <text evidence="1">In airway epithelial cells, localizes to motile cilia.</text>
</comment>
<comment type="miscellaneous">
    <text>Several bitter taste receptors are expressed in a single taste receptor cell.</text>
</comment>
<comment type="similarity">
    <text evidence="3">Belongs to the G-protein coupled receptor T2R family.</text>
</comment>
<evidence type="ECO:0000250" key="1"/>
<evidence type="ECO:0000255" key="2"/>
<evidence type="ECO:0000305" key="3"/>
<name>TA2R4_PANPA</name>
<feature type="chain" id="PRO_0000082206" description="Taste receptor type 2 member 4">
    <location>
        <begin position="1"/>
        <end position="299"/>
    </location>
</feature>
<feature type="topological domain" description="Extracellular" evidence="2">
    <location>
        <begin position="1"/>
        <end position="9"/>
    </location>
</feature>
<feature type="transmembrane region" description="Helical; Name=1" evidence="2">
    <location>
        <begin position="10"/>
        <end position="30"/>
    </location>
</feature>
<feature type="topological domain" description="Cytoplasmic" evidence="2">
    <location>
        <begin position="31"/>
        <end position="46"/>
    </location>
</feature>
<feature type="transmembrane region" description="Helical; Name=2" evidence="2">
    <location>
        <begin position="47"/>
        <end position="67"/>
    </location>
</feature>
<feature type="topological domain" description="Extracellular" evidence="2">
    <location>
        <begin position="68"/>
        <end position="81"/>
    </location>
</feature>
<feature type="transmembrane region" description="Helical; Name=3" evidence="2">
    <location>
        <begin position="82"/>
        <end position="102"/>
    </location>
</feature>
<feature type="topological domain" description="Cytoplasmic" evidence="2">
    <location>
        <begin position="103"/>
        <end position="131"/>
    </location>
</feature>
<feature type="transmembrane region" description="Helical; Name=4" evidence="2">
    <location>
        <begin position="132"/>
        <end position="152"/>
    </location>
</feature>
<feature type="topological domain" description="Extracellular" evidence="2">
    <location>
        <begin position="153"/>
        <end position="172"/>
    </location>
</feature>
<feature type="transmembrane region" description="Helical; Name=5" evidence="2">
    <location>
        <begin position="173"/>
        <end position="193"/>
    </location>
</feature>
<feature type="topological domain" description="Cytoplasmic" evidence="2">
    <location>
        <begin position="194"/>
        <end position="230"/>
    </location>
</feature>
<feature type="transmembrane region" description="Helical; Name=6" evidence="2">
    <location>
        <begin position="231"/>
        <end position="251"/>
    </location>
</feature>
<feature type="topological domain" description="Extracellular" evidence="2">
    <location>
        <begin position="252"/>
        <end position="262"/>
    </location>
</feature>
<feature type="transmembrane region" description="Helical; Name=7" evidence="2">
    <location>
        <begin position="263"/>
        <end position="283"/>
    </location>
</feature>
<feature type="topological domain" description="Cytoplasmic" evidence="2">
    <location>
        <begin position="284"/>
        <end position="299"/>
    </location>
</feature>
<feature type="glycosylation site" description="N-linked (GlcNAc...) asparagine" evidence="2">
    <location>
        <position position="164"/>
    </location>
</feature>
<feature type="glycosylation site" description="N-linked (GlcNAc...) asparagine" evidence="2">
    <location>
        <position position="165"/>
    </location>
</feature>
<accession>Q646D3</accession>
<accession>Q5Y512</accession>
<keyword id="KW-1003">Cell membrane</keyword>
<keyword id="KW-0966">Cell projection</keyword>
<keyword id="KW-0969">Cilium</keyword>
<keyword id="KW-0297">G-protein coupled receptor</keyword>
<keyword id="KW-0325">Glycoprotein</keyword>
<keyword id="KW-0472">Membrane</keyword>
<keyword id="KW-0675">Receptor</keyword>
<keyword id="KW-1185">Reference proteome</keyword>
<keyword id="KW-0716">Sensory transduction</keyword>
<keyword id="KW-0919">Taste</keyword>
<keyword id="KW-0807">Transducer</keyword>
<keyword id="KW-0812">Transmembrane</keyword>
<keyword id="KW-1133">Transmembrane helix</keyword>
<organism>
    <name type="scientific">Pan paniscus</name>
    <name type="common">Pygmy chimpanzee</name>
    <name type="synonym">Bonobo</name>
    <dbReference type="NCBI Taxonomy" id="9597"/>
    <lineage>
        <taxon>Eukaryota</taxon>
        <taxon>Metazoa</taxon>
        <taxon>Chordata</taxon>
        <taxon>Craniata</taxon>
        <taxon>Vertebrata</taxon>
        <taxon>Euteleostomi</taxon>
        <taxon>Mammalia</taxon>
        <taxon>Eutheria</taxon>
        <taxon>Euarchontoglires</taxon>
        <taxon>Primates</taxon>
        <taxon>Haplorrhini</taxon>
        <taxon>Catarrhini</taxon>
        <taxon>Hominidae</taxon>
        <taxon>Pan</taxon>
    </lineage>
</organism>
<sequence length="299" mass="33882">MLRLFYFSAIIASVILNFVGIIMNLFITVVNCKTWVKSHRISSSDRILFSLGITRFLMLGLFLVNTIYFVSSNTERSVYLSAFFVLCFMFLDSSSLWFVTLLNILYCVKITNFQHSVFLLLKRNISPKIPRLLLACVLISAFTTCLYITLSQASPFPELVTTRNNTSFNINEGILSLVVSLVLSSSLQFIINVTSASLLIHSLRRHIQKMQKNATGFWNPQTEAHVGAMKLMVYFLILYIPYSVATLVQYLPFYAGMDMGTKSICLIFATLYSPGHSVLIIITHPKLKTTAKKILCFKK</sequence>
<protein>
    <recommendedName>
        <fullName>Taste receptor type 2 member 4</fullName>
        <shortName>T2R4</shortName>
    </recommendedName>
</protein>
<proteinExistence type="inferred from homology"/>
<dbReference type="EMBL" id="AY724860">
    <property type="protein sequence ID" value="AAU21086.1"/>
    <property type="molecule type" value="Genomic_DNA"/>
</dbReference>
<dbReference type="EMBL" id="AY677134">
    <property type="protein sequence ID" value="AAV28563.1"/>
    <property type="molecule type" value="Genomic_DNA"/>
</dbReference>
<dbReference type="RefSeq" id="XP_003813427.1">
    <property type="nucleotide sequence ID" value="XM_003813379.2"/>
</dbReference>
<dbReference type="SMR" id="Q646D3"/>
<dbReference type="STRING" id="9597.ENSPPAP00000001559"/>
<dbReference type="GlyCosmos" id="Q646D3">
    <property type="glycosylation" value="2 sites, No reported glycans"/>
</dbReference>
<dbReference type="Ensembl" id="ENSPPAT00000007639.1">
    <property type="protein sequence ID" value="ENSPPAP00000001559.1"/>
    <property type="gene ID" value="ENSPPAG00000007093.1"/>
</dbReference>
<dbReference type="eggNOG" id="ENOG502S2SI">
    <property type="taxonomic scope" value="Eukaryota"/>
</dbReference>
<dbReference type="GeneTree" id="ENSGT01100000263477"/>
<dbReference type="OMA" id="MKLMIYF"/>
<dbReference type="Proteomes" id="UP000240080">
    <property type="component" value="Chromosome 7"/>
</dbReference>
<dbReference type="Bgee" id="ENSPPAG00000007093">
    <property type="expression patterns" value="Expressed in cerebellum and 3 other cell types or tissues"/>
</dbReference>
<dbReference type="GO" id="GO:0060170">
    <property type="term" value="C:ciliary membrane"/>
    <property type="evidence" value="ECO:0007669"/>
    <property type="project" value="UniProtKB-SubCell"/>
</dbReference>
<dbReference type="GO" id="GO:0033038">
    <property type="term" value="F:bitter taste receptor activity"/>
    <property type="evidence" value="ECO:0007669"/>
    <property type="project" value="Ensembl"/>
</dbReference>
<dbReference type="GO" id="GO:0004930">
    <property type="term" value="F:G protein-coupled receptor activity"/>
    <property type="evidence" value="ECO:0007669"/>
    <property type="project" value="UniProtKB-KW"/>
</dbReference>
<dbReference type="GO" id="GO:0007585">
    <property type="term" value="P:respiratory gaseous exchange by respiratory system"/>
    <property type="evidence" value="ECO:0007669"/>
    <property type="project" value="Ensembl"/>
</dbReference>
<dbReference type="CDD" id="cd15013">
    <property type="entry name" value="7tm_TAS2R4"/>
    <property type="match status" value="1"/>
</dbReference>
<dbReference type="FunFam" id="1.20.1070.10:FF:000055">
    <property type="entry name" value="Taste receptor type 2"/>
    <property type="match status" value="1"/>
</dbReference>
<dbReference type="Gene3D" id="1.20.1070.10">
    <property type="entry name" value="Rhodopsin 7-helix transmembrane proteins"/>
    <property type="match status" value="1"/>
</dbReference>
<dbReference type="InterPro" id="IPR007960">
    <property type="entry name" value="TAS2R"/>
</dbReference>
<dbReference type="InterPro" id="IPR030055">
    <property type="entry name" value="TAS2R4"/>
</dbReference>
<dbReference type="PANTHER" id="PTHR11394">
    <property type="entry name" value="TASTE RECEPTOR TYPE 2"/>
    <property type="match status" value="1"/>
</dbReference>
<dbReference type="PANTHER" id="PTHR11394:SF55">
    <property type="entry name" value="TASTE RECEPTOR TYPE 2 MEMBER 4"/>
    <property type="match status" value="1"/>
</dbReference>
<dbReference type="Pfam" id="PF05296">
    <property type="entry name" value="TAS2R"/>
    <property type="match status" value="1"/>
</dbReference>
<dbReference type="SUPFAM" id="SSF81321">
    <property type="entry name" value="Family A G protein-coupled receptor-like"/>
    <property type="match status" value="1"/>
</dbReference>